<accession>A8YY92</accession>
<organism>
    <name type="scientific">Staphylococcus aureus (strain USA300 / TCH1516)</name>
    <dbReference type="NCBI Taxonomy" id="451516"/>
    <lineage>
        <taxon>Bacteria</taxon>
        <taxon>Bacillati</taxon>
        <taxon>Bacillota</taxon>
        <taxon>Bacilli</taxon>
        <taxon>Bacillales</taxon>
        <taxon>Staphylococcaceae</taxon>
        <taxon>Staphylococcus</taxon>
    </lineage>
</organism>
<evidence type="ECO:0000255" key="1">
    <source>
        <dbReference type="HAMAP-Rule" id="MF_01227"/>
    </source>
</evidence>
<feature type="chain" id="PRO_1000139587" description="CTP synthase">
    <location>
        <begin position="1"/>
        <end position="536"/>
    </location>
</feature>
<feature type="domain" description="Glutamine amidotransferase type-1" evidence="1">
    <location>
        <begin position="293"/>
        <end position="535"/>
    </location>
</feature>
<feature type="region of interest" description="Amidoligase domain" evidence="1">
    <location>
        <begin position="1"/>
        <end position="267"/>
    </location>
</feature>
<feature type="active site" description="Nucleophile; for glutamine hydrolysis" evidence="1">
    <location>
        <position position="382"/>
    </location>
</feature>
<feature type="active site" evidence="1">
    <location>
        <position position="508"/>
    </location>
</feature>
<feature type="active site" evidence="1">
    <location>
        <position position="510"/>
    </location>
</feature>
<feature type="binding site" evidence="1">
    <location>
        <position position="13"/>
    </location>
    <ligand>
        <name>CTP</name>
        <dbReference type="ChEBI" id="CHEBI:37563"/>
        <note>allosteric inhibitor</note>
    </ligand>
</feature>
<feature type="binding site" evidence="1">
    <location>
        <position position="13"/>
    </location>
    <ligand>
        <name>UTP</name>
        <dbReference type="ChEBI" id="CHEBI:46398"/>
    </ligand>
</feature>
<feature type="binding site" evidence="1">
    <location>
        <begin position="14"/>
        <end position="19"/>
    </location>
    <ligand>
        <name>ATP</name>
        <dbReference type="ChEBI" id="CHEBI:30616"/>
    </ligand>
</feature>
<feature type="binding site" evidence="1">
    <location>
        <position position="54"/>
    </location>
    <ligand>
        <name>L-glutamine</name>
        <dbReference type="ChEBI" id="CHEBI:58359"/>
    </ligand>
</feature>
<feature type="binding site" evidence="1">
    <location>
        <position position="71"/>
    </location>
    <ligand>
        <name>ATP</name>
        <dbReference type="ChEBI" id="CHEBI:30616"/>
    </ligand>
</feature>
<feature type="binding site" evidence="1">
    <location>
        <position position="71"/>
    </location>
    <ligand>
        <name>Mg(2+)</name>
        <dbReference type="ChEBI" id="CHEBI:18420"/>
    </ligand>
</feature>
<feature type="binding site" evidence="1">
    <location>
        <position position="141"/>
    </location>
    <ligand>
        <name>Mg(2+)</name>
        <dbReference type="ChEBI" id="CHEBI:18420"/>
    </ligand>
</feature>
<feature type="binding site" evidence="1">
    <location>
        <begin position="148"/>
        <end position="150"/>
    </location>
    <ligand>
        <name>CTP</name>
        <dbReference type="ChEBI" id="CHEBI:37563"/>
        <note>allosteric inhibitor</note>
    </ligand>
</feature>
<feature type="binding site" evidence="1">
    <location>
        <begin position="188"/>
        <end position="193"/>
    </location>
    <ligand>
        <name>CTP</name>
        <dbReference type="ChEBI" id="CHEBI:37563"/>
        <note>allosteric inhibitor</note>
    </ligand>
</feature>
<feature type="binding site" evidence="1">
    <location>
        <begin position="188"/>
        <end position="193"/>
    </location>
    <ligand>
        <name>UTP</name>
        <dbReference type="ChEBI" id="CHEBI:46398"/>
    </ligand>
</feature>
<feature type="binding site" evidence="1">
    <location>
        <position position="224"/>
    </location>
    <ligand>
        <name>CTP</name>
        <dbReference type="ChEBI" id="CHEBI:37563"/>
        <note>allosteric inhibitor</note>
    </ligand>
</feature>
<feature type="binding site" evidence="1">
    <location>
        <position position="224"/>
    </location>
    <ligand>
        <name>UTP</name>
        <dbReference type="ChEBI" id="CHEBI:46398"/>
    </ligand>
</feature>
<feature type="binding site" evidence="1">
    <location>
        <begin position="240"/>
        <end position="242"/>
    </location>
    <ligand>
        <name>ATP</name>
        <dbReference type="ChEBI" id="CHEBI:30616"/>
    </ligand>
</feature>
<feature type="binding site" evidence="1">
    <location>
        <position position="355"/>
    </location>
    <ligand>
        <name>L-glutamine</name>
        <dbReference type="ChEBI" id="CHEBI:58359"/>
    </ligand>
</feature>
<feature type="binding site" evidence="1">
    <location>
        <begin position="383"/>
        <end position="386"/>
    </location>
    <ligand>
        <name>L-glutamine</name>
        <dbReference type="ChEBI" id="CHEBI:58359"/>
    </ligand>
</feature>
<feature type="binding site" evidence="1">
    <location>
        <position position="406"/>
    </location>
    <ligand>
        <name>L-glutamine</name>
        <dbReference type="ChEBI" id="CHEBI:58359"/>
    </ligand>
</feature>
<feature type="binding site" evidence="1">
    <location>
        <position position="463"/>
    </location>
    <ligand>
        <name>L-glutamine</name>
        <dbReference type="ChEBI" id="CHEBI:58359"/>
    </ligand>
</feature>
<proteinExistence type="inferred from homology"/>
<reference key="1">
    <citation type="journal article" date="2007" name="BMC Microbiol.">
        <title>Subtle genetic changes enhance virulence of methicillin resistant and sensitive Staphylococcus aureus.</title>
        <authorList>
            <person name="Highlander S.K."/>
            <person name="Hulten K.G."/>
            <person name="Qin X."/>
            <person name="Jiang H."/>
            <person name="Yerrapragada S."/>
            <person name="Mason E.O. Jr."/>
            <person name="Shang Y."/>
            <person name="Williams T.M."/>
            <person name="Fortunov R.M."/>
            <person name="Liu Y."/>
            <person name="Igboeli O."/>
            <person name="Petrosino J."/>
            <person name="Tirumalai M."/>
            <person name="Uzman A."/>
            <person name="Fox G.E."/>
            <person name="Cardenas A.M."/>
            <person name="Muzny D.M."/>
            <person name="Hemphill L."/>
            <person name="Ding Y."/>
            <person name="Dugan S."/>
            <person name="Blyth P.R."/>
            <person name="Buhay C.J."/>
            <person name="Dinh H.H."/>
            <person name="Hawes A.C."/>
            <person name="Holder M."/>
            <person name="Kovar C.L."/>
            <person name="Lee S.L."/>
            <person name="Liu W."/>
            <person name="Nazareth L.V."/>
            <person name="Wang Q."/>
            <person name="Zhou J."/>
            <person name="Kaplan S.L."/>
            <person name="Weinstock G.M."/>
        </authorList>
    </citation>
    <scope>NUCLEOTIDE SEQUENCE [LARGE SCALE GENOMIC DNA]</scope>
    <source>
        <strain>USA300 / TCH1516</strain>
    </source>
</reference>
<gene>
    <name evidence="1" type="primary">pyrG</name>
    <name type="ordered locus">USA300HOU_2115</name>
</gene>
<comment type="function">
    <text evidence="1">Catalyzes the ATP-dependent amination of UTP to CTP with either L-glutamine or ammonia as the source of nitrogen. Regulates intracellular CTP levels through interactions with the four ribonucleotide triphosphates.</text>
</comment>
<comment type="catalytic activity">
    <reaction evidence="1">
        <text>UTP + L-glutamine + ATP + H2O = CTP + L-glutamate + ADP + phosphate + 2 H(+)</text>
        <dbReference type="Rhea" id="RHEA:26426"/>
        <dbReference type="ChEBI" id="CHEBI:15377"/>
        <dbReference type="ChEBI" id="CHEBI:15378"/>
        <dbReference type="ChEBI" id="CHEBI:29985"/>
        <dbReference type="ChEBI" id="CHEBI:30616"/>
        <dbReference type="ChEBI" id="CHEBI:37563"/>
        <dbReference type="ChEBI" id="CHEBI:43474"/>
        <dbReference type="ChEBI" id="CHEBI:46398"/>
        <dbReference type="ChEBI" id="CHEBI:58359"/>
        <dbReference type="ChEBI" id="CHEBI:456216"/>
        <dbReference type="EC" id="6.3.4.2"/>
    </reaction>
</comment>
<comment type="catalytic activity">
    <reaction evidence="1">
        <text>L-glutamine + H2O = L-glutamate + NH4(+)</text>
        <dbReference type="Rhea" id="RHEA:15889"/>
        <dbReference type="ChEBI" id="CHEBI:15377"/>
        <dbReference type="ChEBI" id="CHEBI:28938"/>
        <dbReference type="ChEBI" id="CHEBI:29985"/>
        <dbReference type="ChEBI" id="CHEBI:58359"/>
    </reaction>
</comment>
<comment type="catalytic activity">
    <reaction evidence="1">
        <text>UTP + NH4(+) + ATP = CTP + ADP + phosphate + 2 H(+)</text>
        <dbReference type="Rhea" id="RHEA:16597"/>
        <dbReference type="ChEBI" id="CHEBI:15378"/>
        <dbReference type="ChEBI" id="CHEBI:28938"/>
        <dbReference type="ChEBI" id="CHEBI:30616"/>
        <dbReference type="ChEBI" id="CHEBI:37563"/>
        <dbReference type="ChEBI" id="CHEBI:43474"/>
        <dbReference type="ChEBI" id="CHEBI:46398"/>
        <dbReference type="ChEBI" id="CHEBI:456216"/>
    </reaction>
</comment>
<comment type="activity regulation">
    <text evidence="1">Allosterically activated by GTP, when glutamine is the substrate; GTP has no effect on the reaction when ammonia is the substrate. The allosteric effector GTP functions by stabilizing the protein conformation that binds the tetrahedral intermediate(s) formed during glutamine hydrolysis. Inhibited by the product CTP, via allosteric rather than competitive inhibition.</text>
</comment>
<comment type="pathway">
    <text evidence="1">Pyrimidine metabolism; CTP biosynthesis via de novo pathway; CTP from UDP: step 2/2.</text>
</comment>
<comment type="subunit">
    <text evidence="1">Homotetramer.</text>
</comment>
<comment type="miscellaneous">
    <text evidence="1">CTPSs have evolved a hybrid strategy for distinguishing between UTP and CTP. The overlapping regions of the product feedback inhibitory and substrate sites recognize a common feature in both compounds, the triphosphate moiety. To differentiate isosteric substrate and product pyrimidine rings, an additional pocket far from the expected kinase/ligase catalytic site, specifically recognizes the cytosine and ribose portions of the product inhibitor.</text>
</comment>
<comment type="similarity">
    <text evidence="1">Belongs to the CTP synthase family.</text>
</comment>
<protein>
    <recommendedName>
        <fullName evidence="1">CTP synthase</fullName>
        <ecNumber evidence="1">6.3.4.2</ecNumber>
    </recommendedName>
    <alternativeName>
        <fullName evidence="1">Cytidine 5'-triphosphate synthase</fullName>
    </alternativeName>
    <alternativeName>
        <fullName evidence="1">Cytidine triphosphate synthetase</fullName>
        <shortName evidence="1">CTP synthetase</shortName>
        <shortName evidence="1">CTPS</shortName>
    </alternativeName>
    <alternativeName>
        <fullName evidence="1">UTP--ammonia ligase</fullName>
    </alternativeName>
</protein>
<keyword id="KW-0067">ATP-binding</keyword>
<keyword id="KW-0315">Glutamine amidotransferase</keyword>
<keyword id="KW-0436">Ligase</keyword>
<keyword id="KW-0460">Magnesium</keyword>
<keyword id="KW-0479">Metal-binding</keyword>
<keyword id="KW-0547">Nucleotide-binding</keyword>
<keyword id="KW-0665">Pyrimidine biosynthesis</keyword>
<dbReference type="EC" id="6.3.4.2" evidence="1"/>
<dbReference type="EMBL" id="CP000730">
    <property type="protein sequence ID" value="ABX30112.1"/>
    <property type="molecule type" value="Genomic_DNA"/>
</dbReference>
<dbReference type="RefSeq" id="WP_000159960.1">
    <property type="nucleotide sequence ID" value="NC_010079.1"/>
</dbReference>
<dbReference type="SMR" id="A8YY92"/>
<dbReference type="MEROPS" id="C26.964"/>
<dbReference type="KEGG" id="sax:USA300HOU_2115"/>
<dbReference type="HOGENOM" id="CLU_011675_5_0_9"/>
<dbReference type="UniPathway" id="UPA00159">
    <property type="reaction ID" value="UER00277"/>
</dbReference>
<dbReference type="GO" id="GO:0005829">
    <property type="term" value="C:cytosol"/>
    <property type="evidence" value="ECO:0007669"/>
    <property type="project" value="TreeGrafter"/>
</dbReference>
<dbReference type="GO" id="GO:0005524">
    <property type="term" value="F:ATP binding"/>
    <property type="evidence" value="ECO:0007669"/>
    <property type="project" value="UniProtKB-KW"/>
</dbReference>
<dbReference type="GO" id="GO:0003883">
    <property type="term" value="F:CTP synthase activity"/>
    <property type="evidence" value="ECO:0007669"/>
    <property type="project" value="UniProtKB-UniRule"/>
</dbReference>
<dbReference type="GO" id="GO:0004359">
    <property type="term" value="F:glutaminase activity"/>
    <property type="evidence" value="ECO:0007669"/>
    <property type="project" value="RHEA"/>
</dbReference>
<dbReference type="GO" id="GO:0042802">
    <property type="term" value="F:identical protein binding"/>
    <property type="evidence" value="ECO:0007669"/>
    <property type="project" value="TreeGrafter"/>
</dbReference>
<dbReference type="GO" id="GO:0046872">
    <property type="term" value="F:metal ion binding"/>
    <property type="evidence" value="ECO:0007669"/>
    <property type="project" value="UniProtKB-KW"/>
</dbReference>
<dbReference type="GO" id="GO:0044210">
    <property type="term" value="P:'de novo' CTP biosynthetic process"/>
    <property type="evidence" value="ECO:0007669"/>
    <property type="project" value="UniProtKB-UniRule"/>
</dbReference>
<dbReference type="GO" id="GO:0019856">
    <property type="term" value="P:pyrimidine nucleobase biosynthetic process"/>
    <property type="evidence" value="ECO:0007669"/>
    <property type="project" value="TreeGrafter"/>
</dbReference>
<dbReference type="CDD" id="cd03113">
    <property type="entry name" value="CTPS_N"/>
    <property type="match status" value="1"/>
</dbReference>
<dbReference type="CDD" id="cd01746">
    <property type="entry name" value="GATase1_CTP_Synthase"/>
    <property type="match status" value="1"/>
</dbReference>
<dbReference type="FunFam" id="3.40.50.300:FF:000009">
    <property type="entry name" value="CTP synthase"/>
    <property type="match status" value="1"/>
</dbReference>
<dbReference type="FunFam" id="3.40.50.880:FF:000002">
    <property type="entry name" value="CTP synthase"/>
    <property type="match status" value="1"/>
</dbReference>
<dbReference type="Gene3D" id="3.40.50.880">
    <property type="match status" value="1"/>
</dbReference>
<dbReference type="Gene3D" id="3.40.50.300">
    <property type="entry name" value="P-loop containing nucleotide triphosphate hydrolases"/>
    <property type="match status" value="1"/>
</dbReference>
<dbReference type="HAMAP" id="MF_01227">
    <property type="entry name" value="PyrG"/>
    <property type="match status" value="1"/>
</dbReference>
<dbReference type="InterPro" id="IPR029062">
    <property type="entry name" value="Class_I_gatase-like"/>
</dbReference>
<dbReference type="InterPro" id="IPR004468">
    <property type="entry name" value="CTP_synthase"/>
</dbReference>
<dbReference type="InterPro" id="IPR017456">
    <property type="entry name" value="CTP_synthase_N"/>
</dbReference>
<dbReference type="InterPro" id="IPR017926">
    <property type="entry name" value="GATASE"/>
</dbReference>
<dbReference type="InterPro" id="IPR033828">
    <property type="entry name" value="GATase1_CTP_Synthase"/>
</dbReference>
<dbReference type="InterPro" id="IPR027417">
    <property type="entry name" value="P-loop_NTPase"/>
</dbReference>
<dbReference type="NCBIfam" id="NF003792">
    <property type="entry name" value="PRK05380.1"/>
    <property type="match status" value="1"/>
</dbReference>
<dbReference type="NCBIfam" id="TIGR00337">
    <property type="entry name" value="PyrG"/>
    <property type="match status" value="1"/>
</dbReference>
<dbReference type="PANTHER" id="PTHR11550">
    <property type="entry name" value="CTP SYNTHASE"/>
    <property type="match status" value="1"/>
</dbReference>
<dbReference type="PANTHER" id="PTHR11550:SF0">
    <property type="entry name" value="CTP SYNTHASE-RELATED"/>
    <property type="match status" value="1"/>
</dbReference>
<dbReference type="Pfam" id="PF06418">
    <property type="entry name" value="CTP_synth_N"/>
    <property type="match status" value="1"/>
</dbReference>
<dbReference type="Pfam" id="PF00117">
    <property type="entry name" value="GATase"/>
    <property type="match status" value="1"/>
</dbReference>
<dbReference type="SUPFAM" id="SSF52317">
    <property type="entry name" value="Class I glutamine amidotransferase-like"/>
    <property type="match status" value="1"/>
</dbReference>
<dbReference type="SUPFAM" id="SSF52540">
    <property type="entry name" value="P-loop containing nucleoside triphosphate hydrolases"/>
    <property type="match status" value="1"/>
</dbReference>
<dbReference type="PROSITE" id="PS51273">
    <property type="entry name" value="GATASE_TYPE_1"/>
    <property type="match status" value="1"/>
</dbReference>
<sequence length="536" mass="59992">MTKFIFVTGGVVSSLGKGITASSLGRLLKDRGLNVTIQKFDPYLNVDPGTMSPYQHGEVFVTDDGAETDLDLGHYERFIDINLNKFSNVTAGKVYSHVLKKERRGDYLGGTVQVIPHITNEIKERLLLAGESTNADVVITEIGGTTGDIESLPFIEAIRQIRSDLGRENVMYVHCTLLPYIKAAGEMKTKPTQHSVKELRGLGIQPDLIVVRTEYEMTQDLKDKIALFCDINKESVIECRDADSLYEIPLQLSQQNMDDIVIKRLQLNAKYETQLDEWKQLLDIVNNLDGKITIGLVGKYVSLQDAYLSVVESLKHAGYPFAKDIDIRWIDSSEVTDENAAEYLADVDGILVPGGFGFRASEGKISAIKYARENNVPFFGICLGMQLATVEFSRNVLGLEGAHSAELDPATPYPIIDLLPEQKDIEDLGGTLRLGLYPCSIKEGTLAQDVYGKAEIEERHRHRYEFNNDYREQLEANGMVISGTSPDGRLVEMVEIPTNDFFIACQFHPEFLSRPNRPHPIFKSFIEASLKYQQNK</sequence>
<name>PYRG_STAAT</name>